<sequence length="88" mass="10118">MSLLDYFRSNKKQSTAQLAKERLQIIVAHERSSRGGPDYLPQLKQDILDVIRKYVQIDPDKITVQLDKKSDELSVLELNITFADDKKG</sequence>
<evidence type="ECO:0000255" key="1">
    <source>
        <dbReference type="HAMAP-Rule" id="MF_00262"/>
    </source>
</evidence>
<proteinExistence type="inferred from homology"/>
<feature type="chain" id="PRO_0000298065" description="Cell division topological specificity factor">
    <location>
        <begin position="1"/>
        <end position="88"/>
    </location>
</feature>
<reference key="1">
    <citation type="journal article" date="2006" name="J. Bacteriol.">
        <title>Genome sequence of Aeromonas hydrophila ATCC 7966T: jack of all trades.</title>
        <authorList>
            <person name="Seshadri R."/>
            <person name="Joseph S.W."/>
            <person name="Chopra A.K."/>
            <person name="Sha J."/>
            <person name="Shaw J."/>
            <person name="Graf J."/>
            <person name="Haft D.H."/>
            <person name="Wu M."/>
            <person name="Ren Q."/>
            <person name="Rosovitz M.J."/>
            <person name="Madupu R."/>
            <person name="Tallon L."/>
            <person name="Kim M."/>
            <person name="Jin S."/>
            <person name="Vuong H."/>
            <person name="Stine O.C."/>
            <person name="Ali A."/>
            <person name="Horneman A.J."/>
            <person name="Heidelberg J.F."/>
        </authorList>
    </citation>
    <scope>NUCLEOTIDE SEQUENCE [LARGE SCALE GENOMIC DNA]</scope>
    <source>
        <strain>ATCC 7966 / DSM 30187 / BCRC 13018 / CCUG 14551 / JCM 1027 / KCTC 2358 / NCIMB 9240 / NCTC 8049</strain>
    </source>
</reference>
<comment type="function">
    <text evidence="1">Prevents the cell division inhibition by proteins MinC and MinD at internal division sites while permitting inhibition at polar sites. This ensures cell division at the proper site by restricting the formation of a division septum at the midpoint of the long axis of the cell.</text>
</comment>
<comment type="similarity">
    <text evidence="1">Belongs to the MinE family.</text>
</comment>
<protein>
    <recommendedName>
        <fullName evidence="1">Cell division topological specificity factor</fullName>
    </recommendedName>
</protein>
<organism>
    <name type="scientific">Aeromonas hydrophila subsp. hydrophila (strain ATCC 7966 / DSM 30187 / BCRC 13018 / CCUG 14551 / JCM 1027 / KCTC 2358 / NCIMB 9240 / NCTC 8049)</name>
    <dbReference type="NCBI Taxonomy" id="380703"/>
    <lineage>
        <taxon>Bacteria</taxon>
        <taxon>Pseudomonadati</taxon>
        <taxon>Pseudomonadota</taxon>
        <taxon>Gammaproteobacteria</taxon>
        <taxon>Aeromonadales</taxon>
        <taxon>Aeromonadaceae</taxon>
        <taxon>Aeromonas</taxon>
    </lineage>
</organism>
<name>MINE_AERHH</name>
<keyword id="KW-0131">Cell cycle</keyword>
<keyword id="KW-0132">Cell division</keyword>
<keyword id="KW-1185">Reference proteome</keyword>
<accession>A0KK55</accession>
<dbReference type="EMBL" id="CP000462">
    <property type="protein sequence ID" value="ABK36705.1"/>
    <property type="molecule type" value="Genomic_DNA"/>
</dbReference>
<dbReference type="RefSeq" id="WP_011705991.1">
    <property type="nucleotide sequence ID" value="NC_008570.1"/>
</dbReference>
<dbReference type="RefSeq" id="YP_856656.1">
    <property type="nucleotide sequence ID" value="NC_008570.1"/>
</dbReference>
<dbReference type="SMR" id="A0KK55"/>
<dbReference type="STRING" id="380703.AHA_2132"/>
<dbReference type="EnsemblBacteria" id="ABK36705">
    <property type="protein sequence ID" value="ABK36705"/>
    <property type="gene ID" value="AHA_2132"/>
</dbReference>
<dbReference type="GeneID" id="4487633"/>
<dbReference type="KEGG" id="aha:AHA_2132"/>
<dbReference type="PATRIC" id="fig|380703.7.peg.2133"/>
<dbReference type="eggNOG" id="COG0851">
    <property type="taxonomic scope" value="Bacteria"/>
</dbReference>
<dbReference type="HOGENOM" id="CLU_137929_2_2_6"/>
<dbReference type="OrthoDB" id="9802655at2"/>
<dbReference type="Proteomes" id="UP000000756">
    <property type="component" value="Chromosome"/>
</dbReference>
<dbReference type="GO" id="GO:0051301">
    <property type="term" value="P:cell division"/>
    <property type="evidence" value="ECO:0007669"/>
    <property type="project" value="UniProtKB-KW"/>
</dbReference>
<dbReference type="GO" id="GO:0032955">
    <property type="term" value="P:regulation of division septum assembly"/>
    <property type="evidence" value="ECO:0007669"/>
    <property type="project" value="InterPro"/>
</dbReference>
<dbReference type="FunFam" id="3.30.1070.10:FF:000001">
    <property type="entry name" value="Cell division topological specificity factor"/>
    <property type="match status" value="1"/>
</dbReference>
<dbReference type="Gene3D" id="3.30.1070.10">
    <property type="entry name" value="Cell division topological specificity factor MinE"/>
    <property type="match status" value="1"/>
</dbReference>
<dbReference type="HAMAP" id="MF_00262">
    <property type="entry name" value="MinE"/>
    <property type="match status" value="1"/>
</dbReference>
<dbReference type="InterPro" id="IPR005527">
    <property type="entry name" value="MinE"/>
</dbReference>
<dbReference type="InterPro" id="IPR036707">
    <property type="entry name" value="MinE_sf"/>
</dbReference>
<dbReference type="NCBIfam" id="TIGR01215">
    <property type="entry name" value="minE"/>
    <property type="match status" value="1"/>
</dbReference>
<dbReference type="NCBIfam" id="NF001422">
    <property type="entry name" value="PRK00296.1"/>
    <property type="match status" value="1"/>
</dbReference>
<dbReference type="Pfam" id="PF03776">
    <property type="entry name" value="MinE"/>
    <property type="match status" value="1"/>
</dbReference>
<dbReference type="SUPFAM" id="SSF55229">
    <property type="entry name" value="Cell division protein MinE topological specificity domain"/>
    <property type="match status" value="1"/>
</dbReference>
<gene>
    <name evidence="1" type="primary">minE</name>
    <name type="ordered locus">AHA_2132</name>
</gene>